<name>PELA_NEOFI</name>
<organism>
    <name type="scientific">Neosartorya fischeri (strain ATCC 1020 / DSM 3700 / CBS 544.65 / FGSC A1164 / JCM 1740 / NRRL 181 / WB 181)</name>
    <name type="common">Aspergillus fischerianus</name>
    <dbReference type="NCBI Taxonomy" id="331117"/>
    <lineage>
        <taxon>Eukaryota</taxon>
        <taxon>Fungi</taxon>
        <taxon>Dikarya</taxon>
        <taxon>Ascomycota</taxon>
        <taxon>Pezizomycotina</taxon>
        <taxon>Eurotiomycetes</taxon>
        <taxon>Eurotiomycetidae</taxon>
        <taxon>Eurotiales</taxon>
        <taxon>Aspergillaceae</taxon>
        <taxon>Aspergillus</taxon>
        <taxon>Aspergillus subgen. Fumigati</taxon>
    </lineage>
</organism>
<protein>
    <recommendedName>
        <fullName>Probable pectin lyase A</fullName>
        <shortName>PLA</shortName>
        <ecNumber>4.2.2.10</ecNumber>
    </recommendedName>
</protein>
<reference key="1">
    <citation type="journal article" date="2008" name="PLoS Genet.">
        <title>Genomic islands in the pathogenic filamentous fungus Aspergillus fumigatus.</title>
        <authorList>
            <person name="Fedorova N.D."/>
            <person name="Khaldi N."/>
            <person name="Joardar V.S."/>
            <person name="Maiti R."/>
            <person name="Amedeo P."/>
            <person name="Anderson M.J."/>
            <person name="Crabtree J."/>
            <person name="Silva J.C."/>
            <person name="Badger J.H."/>
            <person name="Albarraq A."/>
            <person name="Angiuoli S."/>
            <person name="Bussey H."/>
            <person name="Bowyer P."/>
            <person name="Cotty P.J."/>
            <person name="Dyer P.S."/>
            <person name="Egan A."/>
            <person name="Galens K."/>
            <person name="Fraser-Liggett C.M."/>
            <person name="Haas B.J."/>
            <person name="Inman J.M."/>
            <person name="Kent R."/>
            <person name="Lemieux S."/>
            <person name="Malavazi I."/>
            <person name="Orvis J."/>
            <person name="Roemer T."/>
            <person name="Ronning C.M."/>
            <person name="Sundaram J.P."/>
            <person name="Sutton G."/>
            <person name="Turner G."/>
            <person name="Venter J.C."/>
            <person name="White O.R."/>
            <person name="Whitty B.R."/>
            <person name="Youngman P."/>
            <person name="Wolfe K.H."/>
            <person name="Goldman G.H."/>
            <person name="Wortman J.R."/>
            <person name="Jiang B."/>
            <person name="Denning D.W."/>
            <person name="Nierman W.C."/>
        </authorList>
    </citation>
    <scope>NUCLEOTIDE SEQUENCE [LARGE SCALE GENOMIC DNA]</scope>
    <source>
        <strain>ATCC 1020 / DSM 3700 / CBS 544.65 / FGSC A1164 / JCM 1740 / NRRL 181 / WB 181</strain>
    </source>
</reference>
<sequence>MKYQGLLAIAGCIASASAVSVSGAAEGFAKGVTGGGSATAVYPSTTAELVSYLGDSEARVIVLTKTFDFTGTEGTTTATGCAPWGTASACQLAINQNDWCTNYEPDAPSVSVTYDNAGTLGITVKSNKSLLGSGSSGVIKGKGLRIVSGASNIIIQNIAITDINPKYVWGGDAITINNADMVWIDHVTTARIGRQHLVLGTSASNRVTISNNYFNGVSSYSATCDGYHYWGIYLDGSNDLVTMKGNYIYHFSGRSPKVQGNTLLHAVNNYWYDSSGHAFEIGSGGYVLAEGNVFQNIDTIVESPVDGQLFTSPDSTTNKVCSTYLGHVCQVNGFGSSGTFSQADTGFLSNFAGKNIASASAYTVVQSSVPSSAGQGKI</sequence>
<accession>A1CYC2</accession>
<feature type="signal peptide" evidence="2">
    <location>
        <begin position="1"/>
        <end position="18"/>
    </location>
</feature>
<feature type="chain" id="PRO_0000394344" description="Probable pectin lyase A">
    <location>
        <begin position="19"/>
        <end position="378"/>
    </location>
</feature>
<feature type="active site" evidence="2">
    <location>
        <position position="254"/>
    </location>
</feature>
<feature type="glycosylation site" description="N-linked (GlcNAc...) asparagine" evidence="2">
    <location>
        <position position="127"/>
    </location>
</feature>
<feature type="disulfide bond" evidence="1">
    <location>
        <begin position="81"/>
        <end position="100"/>
    </location>
</feature>
<feature type="disulfide bond" evidence="1">
    <location>
        <begin position="90"/>
        <end position="224"/>
    </location>
</feature>
<feature type="disulfide bond" evidence="1">
    <location>
        <begin position="321"/>
        <end position="329"/>
    </location>
</feature>
<comment type="function">
    <text evidence="1">Pectinolytic enzymes consist of four classes of enzymes: pectin lyase, polygalacturonase, pectin methylesterase and rhamnogalacturonase. Among pectinolytic enzymes, pectin lyase is the most important in depolymerization of pectin, since it cleaves internal glycosidic bonds of highly methylated pectins (By similarity).</text>
</comment>
<comment type="catalytic activity">
    <reaction>
        <text>Eliminative cleavage of (1-&gt;4)-alpha-D-galacturonan methyl ester to give oligosaccharides with 4-deoxy-6-O-methyl-alpha-D-galact-4-enuronosyl groups at their non-reducing ends.</text>
        <dbReference type="EC" id="4.2.2.10"/>
    </reaction>
</comment>
<comment type="subcellular location">
    <subcellularLocation>
        <location evidence="1">Secreted</location>
    </subcellularLocation>
</comment>
<comment type="similarity">
    <text evidence="3">Belongs to the polysaccharide lyase 1 family.</text>
</comment>
<comment type="sequence caution" evidence="3">
    <conflict type="erroneous initiation">
        <sequence resource="EMBL-CDS" id="EAW23742"/>
    </conflict>
    <text>Extended N-terminus.</text>
</comment>
<proteinExistence type="inferred from homology"/>
<evidence type="ECO:0000250" key="1"/>
<evidence type="ECO:0000255" key="2"/>
<evidence type="ECO:0000305" key="3"/>
<keyword id="KW-0119">Carbohydrate metabolism</keyword>
<keyword id="KW-0961">Cell wall biogenesis/degradation</keyword>
<keyword id="KW-1015">Disulfide bond</keyword>
<keyword id="KW-0325">Glycoprotein</keyword>
<keyword id="KW-0456">Lyase</keyword>
<keyword id="KW-0624">Polysaccharide degradation</keyword>
<keyword id="KW-1185">Reference proteome</keyword>
<keyword id="KW-0964">Secreted</keyword>
<keyword id="KW-0732">Signal</keyword>
<dbReference type="EC" id="4.2.2.10"/>
<dbReference type="EMBL" id="DS027686">
    <property type="protein sequence ID" value="EAW23742.1"/>
    <property type="status" value="ALT_INIT"/>
    <property type="molecule type" value="Genomic_DNA"/>
</dbReference>
<dbReference type="RefSeq" id="XP_001265639.1">
    <property type="nucleotide sequence ID" value="XM_001265638.1"/>
</dbReference>
<dbReference type="SMR" id="A1CYC2"/>
<dbReference type="STRING" id="331117.A1CYC2"/>
<dbReference type="GlyCosmos" id="A1CYC2">
    <property type="glycosylation" value="1 site, No reported glycans"/>
</dbReference>
<dbReference type="EnsemblFungi" id="EAW23742">
    <property type="protein sequence ID" value="EAW23742"/>
    <property type="gene ID" value="NFIA_033080"/>
</dbReference>
<dbReference type="GeneID" id="4592857"/>
<dbReference type="KEGG" id="nfi:NFIA_033080"/>
<dbReference type="VEuPathDB" id="FungiDB:NFIA_033080"/>
<dbReference type="eggNOG" id="ENOG502QXM6">
    <property type="taxonomic scope" value="Eukaryota"/>
</dbReference>
<dbReference type="OMA" id="YLGHVCQ"/>
<dbReference type="OrthoDB" id="1637350at2759"/>
<dbReference type="Proteomes" id="UP000006702">
    <property type="component" value="Unassembled WGS sequence"/>
</dbReference>
<dbReference type="GO" id="GO:0005576">
    <property type="term" value="C:extracellular region"/>
    <property type="evidence" value="ECO:0007669"/>
    <property type="project" value="UniProtKB-SubCell"/>
</dbReference>
<dbReference type="GO" id="GO:0030570">
    <property type="term" value="F:pectate lyase activity"/>
    <property type="evidence" value="ECO:0007669"/>
    <property type="project" value="InterPro"/>
</dbReference>
<dbReference type="GO" id="GO:0047490">
    <property type="term" value="F:pectin lyase activity"/>
    <property type="evidence" value="ECO:0000250"/>
    <property type="project" value="UniProtKB"/>
</dbReference>
<dbReference type="GO" id="GO:0071555">
    <property type="term" value="P:cell wall organization"/>
    <property type="evidence" value="ECO:0007669"/>
    <property type="project" value="UniProtKB-KW"/>
</dbReference>
<dbReference type="GO" id="GO:0045490">
    <property type="term" value="P:pectin catabolic process"/>
    <property type="evidence" value="ECO:0000250"/>
    <property type="project" value="UniProtKB"/>
</dbReference>
<dbReference type="FunFam" id="2.160.20.10:FF:000003">
    <property type="entry name" value="Pectin lyase F"/>
    <property type="match status" value="1"/>
</dbReference>
<dbReference type="Gene3D" id="2.160.20.10">
    <property type="entry name" value="Single-stranded right-handed beta-helix, Pectin lyase-like"/>
    <property type="match status" value="1"/>
</dbReference>
<dbReference type="InterPro" id="IPR002022">
    <property type="entry name" value="Pec_lyase"/>
</dbReference>
<dbReference type="InterPro" id="IPR012334">
    <property type="entry name" value="Pectin_lyas_fold"/>
</dbReference>
<dbReference type="InterPro" id="IPR011050">
    <property type="entry name" value="Pectin_lyase_fold/virulence"/>
</dbReference>
<dbReference type="InterPro" id="IPR045032">
    <property type="entry name" value="PEL"/>
</dbReference>
<dbReference type="PANTHER" id="PTHR31683">
    <property type="entry name" value="PECTATE LYASE 18-RELATED"/>
    <property type="match status" value="1"/>
</dbReference>
<dbReference type="PANTHER" id="PTHR31683:SF16">
    <property type="entry name" value="PECTIN LYASE A-RELATED"/>
    <property type="match status" value="1"/>
</dbReference>
<dbReference type="Pfam" id="PF00544">
    <property type="entry name" value="Pectate_lyase_4"/>
    <property type="match status" value="1"/>
</dbReference>
<dbReference type="SMART" id="SM00656">
    <property type="entry name" value="Amb_all"/>
    <property type="match status" value="1"/>
</dbReference>
<dbReference type="SUPFAM" id="SSF51126">
    <property type="entry name" value="Pectin lyase-like"/>
    <property type="match status" value="1"/>
</dbReference>
<gene>
    <name type="primary">pelA</name>
    <name type="ORF">NFIA_033080</name>
</gene>